<accession>Q1Q8P2</accession>
<sequence>MAKAKFERLKPHVNVGTIGHVDHGKTTLTAAIATVAAITSGGEAKDYASIDSAPEEKARGITINTSHVEYDTPSRHYAHVDCPGHADYVKNMITGAAQMDGAILVVSATDGPMPQTREHILLSRQVGVPYIVVFMNKCDVVDDEELLELVEMEVRELLSDYDFPGDDTPIIHGSATEALKGSQEKYGQPAVVELLNVLDTYIPEPERDIDKAFLMPIEDVFSISGRGTVVTGRVESGIVRVGDEIEIVGIRDTQKTTCTGVEMFRKLLDEGRAGENCGVLLRGTKREDVQRGQVLAKPGSITPHTKFDAEVYVLSKEEGGRHTPFLNGYRPQFYFRTTDVTGAIQLQDGTEMVMPGDNVEMGVELIHPIAMDKGLRFAIREGGRTVGAGVVANVLN</sequence>
<proteinExistence type="inferred from homology"/>
<feature type="chain" id="PRO_0000337480" description="Elongation factor Tu">
    <location>
        <begin position="1"/>
        <end position="396"/>
    </location>
</feature>
<feature type="domain" description="tr-type G">
    <location>
        <begin position="10"/>
        <end position="206"/>
    </location>
</feature>
<feature type="region of interest" description="G1" evidence="1">
    <location>
        <begin position="19"/>
        <end position="26"/>
    </location>
</feature>
<feature type="region of interest" description="G2" evidence="1">
    <location>
        <begin position="60"/>
        <end position="64"/>
    </location>
</feature>
<feature type="region of interest" description="G3" evidence="1">
    <location>
        <begin position="81"/>
        <end position="84"/>
    </location>
</feature>
<feature type="region of interest" description="G4" evidence="1">
    <location>
        <begin position="136"/>
        <end position="139"/>
    </location>
</feature>
<feature type="region of interest" description="G5" evidence="1">
    <location>
        <begin position="174"/>
        <end position="176"/>
    </location>
</feature>
<feature type="binding site" evidence="2">
    <location>
        <begin position="19"/>
        <end position="26"/>
    </location>
    <ligand>
        <name>GTP</name>
        <dbReference type="ChEBI" id="CHEBI:37565"/>
    </ligand>
</feature>
<feature type="binding site" evidence="2">
    <location>
        <position position="26"/>
    </location>
    <ligand>
        <name>Mg(2+)</name>
        <dbReference type="ChEBI" id="CHEBI:18420"/>
    </ligand>
</feature>
<feature type="binding site" evidence="2">
    <location>
        <begin position="81"/>
        <end position="85"/>
    </location>
    <ligand>
        <name>GTP</name>
        <dbReference type="ChEBI" id="CHEBI:37565"/>
    </ligand>
</feature>
<feature type="binding site" evidence="2">
    <location>
        <begin position="136"/>
        <end position="139"/>
    </location>
    <ligand>
        <name>GTP</name>
        <dbReference type="ChEBI" id="CHEBI:37565"/>
    </ligand>
</feature>
<gene>
    <name evidence="2" type="primary">tuf1</name>
    <name type="ordered locus">Pcryo_0425</name>
</gene>
<gene>
    <name evidence="2" type="primary">tuf2</name>
    <name type="ordered locus">Pcryo_2184</name>
</gene>
<dbReference type="EC" id="3.6.5.3" evidence="2"/>
<dbReference type="EMBL" id="CP000323">
    <property type="protein sequence ID" value="ABE74208.1"/>
    <property type="molecule type" value="Genomic_DNA"/>
</dbReference>
<dbReference type="EMBL" id="CP000323">
    <property type="protein sequence ID" value="ABE75961.1"/>
    <property type="molecule type" value="Genomic_DNA"/>
</dbReference>
<dbReference type="SMR" id="Q1Q8P2"/>
<dbReference type="STRING" id="335284.Pcryo_0425"/>
<dbReference type="KEGG" id="pcr:Pcryo_0425"/>
<dbReference type="KEGG" id="pcr:Pcryo_2184"/>
<dbReference type="eggNOG" id="COG0050">
    <property type="taxonomic scope" value="Bacteria"/>
</dbReference>
<dbReference type="HOGENOM" id="CLU_007265_0_0_6"/>
<dbReference type="Proteomes" id="UP000002425">
    <property type="component" value="Chromosome"/>
</dbReference>
<dbReference type="GO" id="GO:0005829">
    <property type="term" value="C:cytosol"/>
    <property type="evidence" value="ECO:0007669"/>
    <property type="project" value="TreeGrafter"/>
</dbReference>
<dbReference type="GO" id="GO:0005525">
    <property type="term" value="F:GTP binding"/>
    <property type="evidence" value="ECO:0007669"/>
    <property type="project" value="UniProtKB-UniRule"/>
</dbReference>
<dbReference type="GO" id="GO:0003924">
    <property type="term" value="F:GTPase activity"/>
    <property type="evidence" value="ECO:0007669"/>
    <property type="project" value="InterPro"/>
</dbReference>
<dbReference type="GO" id="GO:0097216">
    <property type="term" value="F:guanosine tetraphosphate binding"/>
    <property type="evidence" value="ECO:0007669"/>
    <property type="project" value="UniProtKB-ARBA"/>
</dbReference>
<dbReference type="GO" id="GO:0003746">
    <property type="term" value="F:translation elongation factor activity"/>
    <property type="evidence" value="ECO:0007669"/>
    <property type="project" value="UniProtKB-UniRule"/>
</dbReference>
<dbReference type="CDD" id="cd01884">
    <property type="entry name" value="EF_Tu"/>
    <property type="match status" value="1"/>
</dbReference>
<dbReference type="CDD" id="cd03697">
    <property type="entry name" value="EFTU_II"/>
    <property type="match status" value="1"/>
</dbReference>
<dbReference type="CDD" id="cd03707">
    <property type="entry name" value="EFTU_III"/>
    <property type="match status" value="1"/>
</dbReference>
<dbReference type="FunFam" id="2.40.30.10:FF:000001">
    <property type="entry name" value="Elongation factor Tu"/>
    <property type="match status" value="1"/>
</dbReference>
<dbReference type="FunFam" id="3.40.50.300:FF:000003">
    <property type="entry name" value="Elongation factor Tu"/>
    <property type="match status" value="1"/>
</dbReference>
<dbReference type="Gene3D" id="3.40.50.300">
    <property type="entry name" value="P-loop containing nucleotide triphosphate hydrolases"/>
    <property type="match status" value="1"/>
</dbReference>
<dbReference type="Gene3D" id="2.40.30.10">
    <property type="entry name" value="Translation factors"/>
    <property type="match status" value="2"/>
</dbReference>
<dbReference type="HAMAP" id="MF_00118_B">
    <property type="entry name" value="EF_Tu_B"/>
    <property type="match status" value="1"/>
</dbReference>
<dbReference type="InterPro" id="IPR041709">
    <property type="entry name" value="EF-Tu_GTP-bd"/>
</dbReference>
<dbReference type="InterPro" id="IPR050055">
    <property type="entry name" value="EF-Tu_GTPase"/>
</dbReference>
<dbReference type="InterPro" id="IPR004161">
    <property type="entry name" value="EFTu-like_2"/>
</dbReference>
<dbReference type="InterPro" id="IPR033720">
    <property type="entry name" value="EFTU_2"/>
</dbReference>
<dbReference type="InterPro" id="IPR031157">
    <property type="entry name" value="G_TR_CS"/>
</dbReference>
<dbReference type="InterPro" id="IPR027417">
    <property type="entry name" value="P-loop_NTPase"/>
</dbReference>
<dbReference type="InterPro" id="IPR005225">
    <property type="entry name" value="Small_GTP-bd"/>
</dbReference>
<dbReference type="InterPro" id="IPR000795">
    <property type="entry name" value="T_Tr_GTP-bd_dom"/>
</dbReference>
<dbReference type="InterPro" id="IPR009000">
    <property type="entry name" value="Transl_B-barrel_sf"/>
</dbReference>
<dbReference type="InterPro" id="IPR009001">
    <property type="entry name" value="Transl_elong_EF1A/Init_IF2_C"/>
</dbReference>
<dbReference type="InterPro" id="IPR004541">
    <property type="entry name" value="Transl_elong_EFTu/EF1A_bac/org"/>
</dbReference>
<dbReference type="InterPro" id="IPR004160">
    <property type="entry name" value="Transl_elong_EFTu/EF1A_C"/>
</dbReference>
<dbReference type="NCBIfam" id="TIGR00485">
    <property type="entry name" value="EF-Tu"/>
    <property type="match status" value="1"/>
</dbReference>
<dbReference type="NCBIfam" id="NF000766">
    <property type="entry name" value="PRK00049.1"/>
    <property type="match status" value="1"/>
</dbReference>
<dbReference type="NCBIfam" id="NF009372">
    <property type="entry name" value="PRK12735.1"/>
    <property type="match status" value="1"/>
</dbReference>
<dbReference type="NCBIfam" id="NF009373">
    <property type="entry name" value="PRK12736.1"/>
    <property type="match status" value="1"/>
</dbReference>
<dbReference type="NCBIfam" id="TIGR00231">
    <property type="entry name" value="small_GTP"/>
    <property type="match status" value="1"/>
</dbReference>
<dbReference type="PANTHER" id="PTHR43721:SF22">
    <property type="entry name" value="ELONGATION FACTOR TU, MITOCHONDRIAL"/>
    <property type="match status" value="1"/>
</dbReference>
<dbReference type="PANTHER" id="PTHR43721">
    <property type="entry name" value="ELONGATION FACTOR TU-RELATED"/>
    <property type="match status" value="1"/>
</dbReference>
<dbReference type="Pfam" id="PF00009">
    <property type="entry name" value="GTP_EFTU"/>
    <property type="match status" value="1"/>
</dbReference>
<dbReference type="Pfam" id="PF03144">
    <property type="entry name" value="GTP_EFTU_D2"/>
    <property type="match status" value="1"/>
</dbReference>
<dbReference type="Pfam" id="PF03143">
    <property type="entry name" value="GTP_EFTU_D3"/>
    <property type="match status" value="1"/>
</dbReference>
<dbReference type="PRINTS" id="PR00315">
    <property type="entry name" value="ELONGATNFCT"/>
</dbReference>
<dbReference type="SUPFAM" id="SSF50465">
    <property type="entry name" value="EF-Tu/eEF-1alpha/eIF2-gamma C-terminal domain"/>
    <property type="match status" value="1"/>
</dbReference>
<dbReference type="SUPFAM" id="SSF52540">
    <property type="entry name" value="P-loop containing nucleoside triphosphate hydrolases"/>
    <property type="match status" value="1"/>
</dbReference>
<dbReference type="SUPFAM" id="SSF50447">
    <property type="entry name" value="Translation proteins"/>
    <property type="match status" value="1"/>
</dbReference>
<dbReference type="PROSITE" id="PS00301">
    <property type="entry name" value="G_TR_1"/>
    <property type="match status" value="1"/>
</dbReference>
<dbReference type="PROSITE" id="PS51722">
    <property type="entry name" value="G_TR_2"/>
    <property type="match status" value="1"/>
</dbReference>
<comment type="function">
    <text evidence="2">GTP hydrolase that promotes the GTP-dependent binding of aminoacyl-tRNA to the A-site of ribosomes during protein biosynthesis.</text>
</comment>
<comment type="catalytic activity">
    <reaction evidence="2">
        <text>GTP + H2O = GDP + phosphate + H(+)</text>
        <dbReference type="Rhea" id="RHEA:19669"/>
        <dbReference type="ChEBI" id="CHEBI:15377"/>
        <dbReference type="ChEBI" id="CHEBI:15378"/>
        <dbReference type="ChEBI" id="CHEBI:37565"/>
        <dbReference type="ChEBI" id="CHEBI:43474"/>
        <dbReference type="ChEBI" id="CHEBI:58189"/>
        <dbReference type="EC" id="3.6.5.3"/>
    </reaction>
    <physiologicalReaction direction="left-to-right" evidence="2">
        <dbReference type="Rhea" id="RHEA:19670"/>
    </physiologicalReaction>
</comment>
<comment type="subunit">
    <text evidence="2">Monomer.</text>
</comment>
<comment type="subcellular location">
    <subcellularLocation>
        <location evidence="2">Cytoplasm</location>
    </subcellularLocation>
</comment>
<comment type="similarity">
    <text evidence="2">Belongs to the TRAFAC class translation factor GTPase superfamily. Classic translation factor GTPase family. EF-Tu/EF-1A subfamily.</text>
</comment>
<reference key="1">
    <citation type="submission" date="2006-03" db="EMBL/GenBank/DDBJ databases">
        <title>Complete sequence of chromosome of Psychrobacter cryohalolentis K5.</title>
        <authorList>
            <consortium name="US DOE Joint Genome Institute"/>
            <person name="Copeland A."/>
            <person name="Lucas S."/>
            <person name="Lapidus A."/>
            <person name="Barry K."/>
            <person name="Detter J.C."/>
            <person name="Glavina T."/>
            <person name="Hammon N."/>
            <person name="Israni S."/>
            <person name="Dalin E."/>
            <person name="Tice H."/>
            <person name="Pitluck S."/>
            <person name="Brettin T."/>
            <person name="Bruce D."/>
            <person name="Han C."/>
            <person name="Tapia R."/>
            <person name="Sims D.R."/>
            <person name="Gilna P."/>
            <person name="Schmutz J."/>
            <person name="Larimer F."/>
            <person name="Land M."/>
            <person name="Hauser L."/>
            <person name="Kyrpides N."/>
            <person name="Kim E."/>
            <person name="Richardson P."/>
        </authorList>
    </citation>
    <scope>NUCLEOTIDE SEQUENCE [LARGE SCALE GENOMIC DNA]</scope>
    <source>
        <strain>ATCC BAA-1226 / DSM 17306 / VKM B-2378 / K5</strain>
    </source>
</reference>
<organism>
    <name type="scientific">Psychrobacter cryohalolentis (strain ATCC BAA-1226 / DSM 17306 / VKM B-2378 / K5)</name>
    <dbReference type="NCBI Taxonomy" id="335284"/>
    <lineage>
        <taxon>Bacteria</taxon>
        <taxon>Pseudomonadati</taxon>
        <taxon>Pseudomonadota</taxon>
        <taxon>Gammaproteobacteria</taxon>
        <taxon>Moraxellales</taxon>
        <taxon>Moraxellaceae</taxon>
        <taxon>Psychrobacter</taxon>
    </lineage>
</organism>
<keyword id="KW-0963">Cytoplasm</keyword>
<keyword id="KW-0251">Elongation factor</keyword>
<keyword id="KW-0342">GTP-binding</keyword>
<keyword id="KW-0378">Hydrolase</keyword>
<keyword id="KW-0460">Magnesium</keyword>
<keyword id="KW-0479">Metal-binding</keyword>
<keyword id="KW-0547">Nucleotide-binding</keyword>
<keyword id="KW-0648">Protein biosynthesis</keyword>
<name>EFTU_PSYCK</name>
<protein>
    <recommendedName>
        <fullName evidence="2">Elongation factor Tu</fullName>
        <shortName evidence="2">EF-Tu</shortName>
        <ecNumber evidence="2">3.6.5.3</ecNumber>
    </recommendedName>
</protein>
<evidence type="ECO:0000250" key="1"/>
<evidence type="ECO:0000255" key="2">
    <source>
        <dbReference type="HAMAP-Rule" id="MF_00118"/>
    </source>
</evidence>